<keyword id="KW-0028">Amino-acid biosynthesis</keyword>
<keyword id="KW-0057">Aromatic amino acid biosynthesis</keyword>
<keyword id="KW-0170">Cobalt</keyword>
<keyword id="KW-0963">Cytoplasm</keyword>
<keyword id="KW-0456">Lyase</keyword>
<keyword id="KW-0479">Metal-binding</keyword>
<keyword id="KW-0520">NAD</keyword>
<keyword id="KW-0547">Nucleotide-binding</keyword>
<keyword id="KW-0862">Zinc</keyword>
<comment type="function">
    <text evidence="1">Catalyzes the conversion of 3-deoxy-D-arabino-heptulosonate 7-phosphate (DAHP) to dehydroquinate (DHQ).</text>
</comment>
<comment type="catalytic activity">
    <reaction evidence="1">
        <text>7-phospho-2-dehydro-3-deoxy-D-arabino-heptonate = 3-dehydroquinate + phosphate</text>
        <dbReference type="Rhea" id="RHEA:21968"/>
        <dbReference type="ChEBI" id="CHEBI:32364"/>
        <dbReference type="ChEBI" id="CHEBI:43474"/>
        <dbReference type="ChEBI" id="CHEBI:58394"/>
        <dbReference type="EC" id="4.2.3.4"/>
    </reaction>
</comment>
<comment type="cofactor">
    <cofactor evidence="1">
        <name>Co(2+)</name>
        <dbReference type="ChEBI" id="CHEBI:48828"/>
    </cofactor>
    <cofactor evidence="1">
        <name>Zn(2+)</name>
        <dbReference type="ChEBI" id="CHEBI:29105"/>
    </cofactor>
    <text evidence="1">Binds 1 divalent metal cation per subunit. Can use either Co(2+) or Zn(2+).</text>
</comment>
<comment type="cofactor">
    <cofactor evidence="1">
        <name>NAD(+)</name>
        <dbReference type="ChEBI" id="CHEBI:57540"/>
    </cofactor>
</comment>
<comment type="pathway">
    <text evidence="1">Metabolic intermediate biosynthesis; chorismate biosynthesis; chorismate from D-erythrose 4-phosphate and phosphoenolpyruvate: step 2/7.</text>
</comment>
<comment type="subcellular location">
    <subcellularLocation>
        <location evidence="1">Cytoplasm</location>
    </subcellularLocation>
</comment>
<comment type="similarity">
    <text evidence="1">Belongs to the sugar phosphate cyclases superfamily. Dehydroquinate synthase family.</text>
</comment>
<accession>Q63DL5</accession>
<protein>
    <recommendedName>
        <fullName evidence="1">3-dehydroquinate synthase</fullName>
        <shortName evidence="1">DHQS</shortName>
        <ecNumber evidence="1">4.2.3.4</ecNumber>
    </recommendedName>
</protein>
<reference key="1">
    <citation type="journal article" date="2006" name="J. Bacteriol.">
        <title>Pathogenomic sequence analysis of Bacillus cereus and Bacillus thuringiensis isolates closely related to Bacillus anthracis.</title>
        <authorList>
            <person name="Han C.S."/>
            <person name="Xie G."/>
            <person name="Challacombe J.F."/>
            <person name="Altherr M.R."/>
            <person name="Bhotika S.S."/>
            <person name="Bruce D."/>
            <person name="Campbell C.S."/>
            <person name="Campbell M.L."/>
            <person name="Chen J."/>
            <person name="Chertkov O."/>
            <person name="Cleland C."/>
            <person name="Dimitrijevic M."/>
            <person name="Doggett N.A."/>
            <person name="Fawcett J.J."/>
            <person name="Glavina T."/>
            <person name="Goodwin L.A."/>
            <person name="Hill K.K."/>
            <person name="Hitchcock P."/>
            <person name="Jackson P.J."/>
            <person name="Keim P."/>
            <person name="Kewalramani A.R."/>
            <person name="Longmire J."/>
            <person name="Lucas S."/>
            <person name="Malfatti S."/>
            <person name="McMurry K."/>
            <person name="Meincke L.J."/>
            <person name="Misra M."/>
            <person name="Moseman B.L."/>
            <person name="Mundt M."/>
            <person name="Munk A.C."/>
            <person name="Okinaka R.T."/>
            <person name="Parson-Quintana B."/>
            <person name="Reilly L.P."/>
            <person name="Richardson P."/>
            <person name="Robinson D.L."/>
            <person name="Rubin E."/>
            <person name="Saunders E."/>
            <person name="Tapia R."/>
            <person name="Tesmer J.G."/>
            <person name="Thayer N."/>
            <person name="Thompson L.S."/>
            <person name="Tice H."/>
            <person name="Ticknor L.O."/>
            <person name="Wills P.L."/>
            <person name="Brettin T.S."/>
            <person name="Gilna P."/>
        </authorList>
    </citation>
    <scope>NUCLEOTIDE SEQUENCE [LARGE SCALE GENOMIC DNA]</scope>
    <source>
        <strain>ZK / E33L</strain>
    </source>
</reference>
<feature type="chain" id="PRO_0000231064" description="3-dehydroquinate synthase">
    <location>
        <begin position="1"/>
        <end position="361"/>
    </location>
</feature>
<feature type="binding site" evidence="1">
    <location>
        <begin position="72"/>
        <end position="77"/>
    </location>
    <ligand>
        <name>NAD(+)</name>
        <dbReference type="ChEBI" id="CHEBI:57540"/>
    </ligand>
</feature>
<feature type="binding site" evidence="1">
    <location>
        <begin position="130"/>
        <end position="131"/>
    </location>
    <ligand>
        <name>NAD(+)</name>
        <dbReference type="ChEBI" id="CHEBI:57540"/>
    </ligand>
</feature>
<feature type="binding site" evidence="1">
    <location>
        <position position="142"/>
    </location>
    <ligand>
        <name>NAD(+)</name>
        <dbReference type="ChEBI" id="CHEBI:57540"/>
    </ligand>
</feature>
<feature type="binding site" evidence="1">
    <location>
        <position position="151"/>
    </location>
    <ligand>
        <name>NAD(+)</name>
        <dbReference type="ChEBI" id="CHEBI:57540"/>
    </ligand>
</feature>
<feature type="binding site" evidence="1">
    <location>
        <position position="184"/>
    </location>
    <ligand>
        <name>Zn(2+)</name>
        <dbReference type="ChEBI" id="CHEBI:29105"/>
    </ligand>
</feature>
<feature type="binding site" evidence="1">
    <location>
        <position position="247"/>
    </location>
    <ligand>
        <name>Zn(2+)</name>
        <dbReference type="ChEBI" id="CHEBI:29105"/>
    </ligand>
</feature>
<feature type="binding site" evidence="1">
    <location>
        <position position="264"/>
    </location>
    <ligand>
        <name>Zn(2+)</name>
        <dbReference type="ChEBI" id="CHEBI:29105"/>
    </ligand>
</feature>
<evidence type="ECO:0000255" key="1">
    <source>
        <dbReference type="HAMAP-Rule" id="MF_00110"/>
    </source>
</evidence>
<proteinExistence type="inferred from homology"/>
<sequence>MGNIHIQTKSKEYDVYVGKESLSHLTTIVQNMQPSVSNIMIISDEAVASLHLQTVVDALQIDRKVFSFVVPSGEKEKSFENFYAAHTSALENKLDRNSLIVALGGGMIGDLAGFVAASFMRGIRFVQVPTTLLAHDSAVGGKVAINHPLGKNMIGAFHQPEAVVYHTPFLQSLPEKEWRSGYAEVIKHALIGDVKLYHWLKEDVQTLADLRDEKLIHILTKAIPVKANIVAQDETEKGVRAHLNFGHTLGHALEKELGYGNITHGDGVAVGMLFAIFLSEQVYKVNLAYEEMKQWFLKYGYPKMPSDLSVERLVQLMKQDKKANAGTIHMVLMQEYGVVNVVSIPDETVHIALEAFQKDMF</sequence>
<name>AROB_BACCZ</name>
<gene>
    <name evidence="1" type="primary">aroB</name>
    <name type="ordered locus">BCE33L1399</name>
</gene>
<dbReference type="EC" id="4.2.3.4" evidence="1"/>
<dbReference type="EMBL" id="CP000001">
    <property type="protein sequence ID" value="AAU18849.1"/>
    <property type="molecule type" value="Genomic_DNA"/>
</dbReference>
<dbReference type="RefSeq" id="WP_000526837.1">
    <property type="nucleotide sequence ID" value="NC_006274.1"/>
</dbReference>
<dbReference type="SMR" id="Q63DL5"/>
<dbReference type="KEGG" id="bcz:BCE33L1399"/>
<dbReference type="PATRIC" id="fig|288681.22.peg.4153"/>
<dbReference type="UniPathway" id="UPA00053">
    <property type="reaction ID" value="UER00085"/>
</dbReference>
<dbReference type="Proteomes" id="UP000002612">
    <property type="component" value="Chromosome"/>
</dbReference>
<dbReference type="GO" id="GO:0005737">
    <property type="term" value="C:cytoplasm"/>
    <property type="evidence" value="ECO:0007669"/>
    <property type="project" value="UniProtKB-SubCell"/>
</dbReference>
<dbReference type="GO" id="GO:0003856">
    <property type="term" value="F:3-dehydroquinate synthase activity"/>
    <property type="evidence" value="ECO:0007669"/>
    <property type="project" value="UniProtKB-UniRule"/>
</dbReference>
<dbReference type="GO" id="GO:0046872">
    <property type="term" value="F:metal ion binding"/>
    <property type="evidence" value="ECO:0007669"/>
    <property type="project" value="UniProtKB-KW"/>
</dbReference>
<dbReference type="GO" id="GO:0000166">
    <property type="term" value="F:nucleotide binding"/>
    <property type="evidence" value="ECO:0007669"/>
    <property type="project" value="UniProtKB-KW"/>
</dbReference>
<dbReference type="GO" id="GO:0008652">
    <property type="term" value="P:amino acid biosynthetic process"/>
    <property type="evidence" value="ECO:0007669"/>
    <property type="project" value="UniProtKB-KW"/>
</dbReference>
<dbReference type="GO" id="GO:0009073">
    <property type="term" value="P:aromatic amino acid family biosynthetic process"/>
    <property type="evidence" value="ECO:0007669"/>
    <property type="project" value="UniProtKB-KW"/>
</dbReference>
<dbReference type="GO" id="GO:0009423">
    <property type="term" value="P:chorismate biosynthetic process"/>
    <property type="evidence" value="ECO:0007669"/>
    <property type="project" value="UniProtKB-UniRule"/>
</dbReference>
<dbReference type="CDD" id="cd08195">
    <property type="entry name" value="DHQS"/>
    <property type="match status" value="1"/>
</dbReference>
<dbReference type="FunFam" id="1.20.1090.10:FF:000008">
    <property type="entry name" value="3-dehydroquinate synthase"/>
    <property type="match status" value="1"/>
</dbReference>
<dbReference type="FunFam" id="3.40.50.1970:FF:000001">
    <property type="entry name" value="3-dehydroquinate synthase"/>
    <property type="match status" value="1"/>
</dbReference>
<dbReference type="Gene3D" id="3.40.50.1970">
    <property type="match status" value="1"/>
</dbReference>
<dbReference type="Gene3D" id="1.20.1090.10">
    <property type="entry name" value="Dehydroquinate synthase-like - alpha domain"/>
    <property type="match status" value="1"/>
</dbReference>
<dbReference type="HAMAP" id="MF_00110">
    <property type="entry name" value="DHQ_synthase"/>
    <property type="match status" value="1"/>
</dbReference>
<dbReference type="InterPro" id="IPR050071">
    <property type="entry name" value="Dehydroquinate_synthase"/>
</dbReference>
<dbReference type="InterPro" id="IPR016037">
    <property type="entry name" value="DHQ_synth_AroB"/>
</dbReference>
<dbReference type="InterPro" id="IPR030963">
    <property type="entry name" value="DHQ_synth_fam"/>
</dbReference>
<dbReference type="InterPro" id="IPR030960">
    <property type="entry name" value="DHQS/DOIS_N"/>
</dbReference>
<dbReference type="InterPro" id="IPR056179">
    <property type="entry name" value="DHQS_C"/>
</dbReference>
<dbReference type="NCBIfam" id="TIGR01357">
    <property type="entry name" value="aroB"/>
    <property type="match status" value="1"/>
</dbReference>
<dbReference type="PANTHER" id="PTHR43622">
    <property type="entry name" value="3-DEHYDROQUINATE SYNTHASE"/>
    <property type="match status" value="1"/>
</dbReference>
<dbReference type="PANTHER" id="PTHR43622:SF7">
    <property type="entry name" value="3-DEHYDROQUINATE SYNTHASE, CHLOROPLASTIC"/>
    <property type="match status" value="1"/>
</dbReference>
<dbReference type="Pfam" id="PF01761">
    <property type="entry name" value="DHQ_synthase"/>
    <property type="match status" value="1"/>
</dbReference>
<dbReference type="Pfam" id="PF24621">
    <property type="entry name" value="DHQS_C"/>
    <property type="match status" value="1"/>
</dbReference>
<dbReference type="PIRSF" id="PIRSF001455">
    <property type="entry name" value="DHQ_synth"/>
    <property type="match status" value="1"/>
</dbReference>
<dbReference type="SUPFAM" id="SSF56796">
    <property type="entry name" value="Dehydroquinate synthase-like"/>
    <property type="match status" value="1"/>
</dbReference>
<organism>
    <name type="scientific">Bacillus cereus (strain ZK / E33L)</name>
    <dbReference type="NCBI Taxonomy" id="288681"/>
    <lineage>
        <taxon>Bacteria</taxon>
        <taxon>Bacillati</taxon>
        <taxon>Bacillota</taxon>
        <taxon>Bacilli</taxon>
        <taxon>Bacillales</taxon>
        <taxon>Bacillaceae</taxon>
        <taxon>Bacillus</taxon>
        <taxon>Bacillus cereus group</taxon>
    </lineage>
</organism>